<feature type="initiator methionine" description="Removed" evidence="1">
    <location>
        <position position="1"/>
    </location>
</feature>
<feature type="chain" id="PRO_0000213436" description="Major sperm protein 10/36/56/76">
    <location>
        <begin position="2"/>
        <end position="127"/>
    </location>
</feature>
<feature type="domain" description="MSP" evidence="2">
    <location>
        <begin position="9"/>
        <end position="126"/>
    </location>
</feature>
<feature type="modified residue" description="N-acetylalanine" evidence="1">
    <location>
        <position position="2"/>
    </location>
</feature>
<feature type="sequence conflict" description="In Ref. 1; AAA28115/AAA28116." evidence="3" ref="1">
    <original>I</original>
    <variation>T</variation>
    <location>
        <position position="46"/>
    </location>
</feature>
<feature type="sequence conflict" description="In Ref. 1; AAA28116." evidence="3" ref="1">
    <original>T</original>
    <variation>A</variation>
    <location>
        <position position="49"/>
    </location>
</feature>
<reference key="1">
    <citation type="journal article" date="1984" name="Mol. Cell. Biol.">
        <title>Isolation and characterization of a sperm-specific gene family in the nematode Caenorhabditis elegans.</title>
        <authorList>
            <person name="Klass M.R."/>
            <person name="Kinsley S."/>
            <person name="Lopez L.C."/>
        </authorList>
    </citation>
    <scope>NUCLEOTIDE SEQUENCE [GENOMIC DNA / MRNA] (MSP-10 AND MSP-56)</scope>
    <source>
        <strain>Bristol N2</strain>
    </source>
</reference>
<reference key="2">
    <citation type="journal article" date="1998" name="Science">
        <title>Genome sequence of the nematode C. elegans: a platform for investigating biology.</title>
        <authorList>
            <consortium name="The C. elegans sequencing consortium"/>
        </authorList>
    </citation>
    <scope>NUCLEOTIDE SEQUENCE [LARGE SCALE GENOMIC DNA] (MSP-10; MSP-36; MSP-56 AND MSP-76)</scope>
    <source>
        <strain>Bristol N2</strain>
    </source>
</reference>
<organism>
    <name type="scientific">Caenorhabditis elegans</name>
    <dbReference type="NCBI Taxonomy" id="6239"/>
    <lineage>
        <taxon>Eukaryota</taxon>
        <taxon>Metazoa</taxon>
        <taxon>Ecdysozoa</taxon>
        <taxon>Nematoda</taxon>
        <taxon>Chromadorea</taxon>
        <taxon>Rhabditida</taxon>
        <taxon>Rhabditina</taxon>
        <taxon>Rhabditomorpha</taxon>
        <taxon>Rhabditoidea</taxon>
        <taxon>Rhabditidae</taxon>
        <taxon>Peloderinae</taxon>
        <taxon>Caenorhabditis</taxon>
    </lineage>
</organism>
<sequence length="127" mass="14236">MAQSVPPGDIQTQPNAKIVFNAPYDDKHTYHIKVINSSARRIGYGIKTTNMKRLGVDPPCGVLDPKEAVLLAVSCDAFAFGQEDTNNDRITVEWTNTPDGAAKQFRREWFQGDGMVRRKNLPIEYNP</sequence>
<evidence type="ECO:0000250" key="1"/>
<evidence type="ECO:0000255" key="2">
    <source>
        <dbReference type="PROSITE-ProRule" id="PRU00132"/>
    </source>
</evidence>
<evidence type="ECO:0000305" key="3"/>
<protein>
    <recommendedName>
        <fullName>Major sperm protein 10/36/56/76</fullName>
        <shortName>MSP</shortName>
    </recommendedName>
</protein>
<proteinExistence type="evidence at transcript level"/>
<comment type="function">
    <text>Central component in molecular interactions underlying sperm crawling. Forms an extensive filament system that extends from sperm villipoda, along the leading edge of the pseudopod.</text>
</comment>
<comment type="subcellular location">
    <subcellularLocation>
        <location>Cell projection</location>
        <location>Pseudopodium</location>
    </subcellularLocation>
    <subcellularLocation>
        <location>Cytoplasm</location>
        <location>Cytoskeleton</location>
    </subcellularLocation>
</comment>
<comment type="tissue specificity">
    <text>Sperm.</text>
</comment>
<comment type="miscellaneous">
    <text>Around 30 MSP isoforms may exist in C.elegans.</text>
</comment>
<keyword id="KW-0007">Acetylation</keyword>
<keyword id="KW-0966">Cell projection</keyword>
<keyword id="KW-0963">Cytoplasm</keyword>
<keyword id="KW-0206">Cytoskeleton</keyword>
<keyword id="KW-1185">Reference proteome</keyword>
<dbReference type="EMBL" id="K02617">
    <property type="protein sequence ID" value="AAA28115.1"/>
    <property type="molecule type" value="mRNA"/>
</dbReference>
<dbReference type="EMBL" id="K02618">
    <property type="protein sequence ID" value="AAA28116.1"/>
    <property type="molecule type" value="Genomic_DNA"/>
</dbReference>
<dbReference type="EMBL" id="Z70284">
    <property type="protein sequence ID" value="CAA94278.1"/>
    <property type="molecule type" value="Genomic_DNA"/>
</dbReference>
<dbReference type="EMBL" id="Z70718">
    <property type="protein sequence ID" value="CAA94674.1"/>
    <property type="molecule type" value="Genomic_DNA"/>
</dbReference>
<dbReference type="EMBL" id="Z70284">
    <property type="protein sequence ID" value="CAA94283.1"/>
    <property type="molecule type" value="Genomic_DNA"/>
</dbReference>
<dbReference type="EMBL" id="Z68222">
    <property type="protein sequence ID" value="CAA92502.1"/>
    <property type="molecule type" value="Genomic_DNA"/>
</dbReference>
<dbReference type="PIR" id="F88801">
    <property type="entry name" value="F88801"/>
</dbReference>
<dbReference type="RefSeq" id="NP_501722.1">
    <property type="nucleotide sequence ID" value="NM_069321.5"/>
</dbReference>
<dbReference type="RefSeq" id="NP_501760.1">
    <property type="nucleotide sequence ID" value="NM_069359.7"/>
</dbReference>
<dbReference type="RefSeq" id="NP_501762.1">
    <property type="nucleotide sequence ID" value="NM_069361.5"/>
</dbReference>
<dbReference type="RefSeq" id="NP_501834.1">
    <property type="nucleotide sequence ID" value="NM_069433.3"/>
</dbReference>
<dbReference type="SMR" id="P05634"/>
<dbReference type="BioGRID" id="42934">
    <property type="interactions" value="1"/>
</dbReference>
<dbReference type="FunCoup" id="P05634">
    <property type="interactions" value="34"/>
</dbReference>
<dbReference type="IntAct" id="P05634">
    <property type="interactions" value="1"/>
</dbReference>
<dbReference type="STRING" id="6239.C04G2.4.1"/>
<dbReference type="PaxDb" id="6239-C04G2.4"/>
<dbReference type="PeptideAtlas" id="P05634"/>
<dbReference type="EnsemblMetazoa" id="C04G2.4.1">
    <property type="protein sequence ID" value="C04G2.4.1"/>
    <property type="gene ID" value="WBGene00003432"/>
</dbReference>
<dbReference type="EnsemblMetazoa" id="K07F5.2.1">
    <property type="protein sequence ID" value="K07F5.2.1"/>
    <property type="gene ID" value="WBGene00003425"/>
</dbReference>
<dbReference type="EnsemblMetazoa" id="K07F5.3.1">
    <property type="protein sequence ID" value="K07F5.3.1"/>
    <property type="gene ID" value="WBGene00003449"/>
</dbReference>
<dbReference type="EnsemblMetazoa" id="ZK1251.6.1">
    <property type="protein sequence ID" value="ZK1251.6.1"/>
    <property type="gene ID" value="WBGene00003463"/>
</dbReference>
<dbReference type="GeneID" id="177828"/>
<dbReference type="GeneID" id="177830"/>
<dbReference type="KEGG" id="cel:CELE_K07F5.2"/>
<dbReference type="KEGG" id="cel:CELE_K07F5.3"/>
<dbReference type="UCSC" id="ZK1251.6">
    <property type="organism name" value="c. elegans"/>
</dbReference>
<dbReference type="AGR" id="WB:WBGene00003425"/>
<dbReference type="AGR" id="WB:WBGene00003432"/>
<dbReference type="AGR" id="WB:WBGene00003449"/>
<dbReference type="AGR" id="WB:WBGene00003463"/>
<dbReference type="CTD" id="177828"/>
<dbReference type="CTD" id="177830"/>
<dbReference type="WormBase" id="C04G2.4">
    <property type="protein sequence ID" value="CE03853"/>
    <property type="gene ID" value="WBGene00003432"/>
    <property type="gene designation" value="msp-36"/>
</dbReference>
<dbReference type="WormBase" id="K07F5.2">
    <property type="protein sequence ID" value="CE03853"/>
    <property type="gene ID" value="WBGene00003425"/>
    <property type="gene designation" value="msp-10"/>
</dbReference>
<dbReference type="WormBase" id="K07F5.3">
    <property type="protein sequence ID" value="CE03853"/>
    <property type="gene ID" value="WBGene00003449"/>
    <property type="gene designation" value="msp-56"/>
</dbReference>
<dbReference type="WormBase" id="ZK1251.6">
    <property type="protein sequence ID" value="CE03853"/>
    <property type="gene ID" value="WBGene00003463"/>
    <property type="gene designation" value="msp-76"/>
</dbReference>
<dbReference type="eggNOG" id="ENOG502RXF6">
    <property type="taxonomic scope" value="Eukaryota"/>
</dbReference>
<dbReference type="GeneTree" id="ENSGT00970000195833"/>
<dbReference type="HOGENOM" id="CLU_120664_0_1_1"/>
<dbReference type="InParanoid" id="P05634"/>
<dbReference type="OMA" id="WCEVEPE"/>
<dbReference type="OrthoDB" id="5918453at2759"/>
<dbReference type="PhylomeDB" id="P05634"/>
<dbReference type="PRO" id="PR:P05634"/>
<dbReference type="Proteomes" id="UP000001940">
    <property type="component" value="Chromosome IV"/>
</dbReference>
<dbReference type="Bgee" id="WBGene00003425">
    <property type="expression patterns" value="Expressed in adult organism and 1 other cell type or tissue"/>
</dbReference>
<dbReference type="GO" id="GO:0005737">
    <property type="term" value="C:cytoplasm"/>
    <property type="evidence" value="ECO:0007669"/>
    <property type="project" value="UniProtKB-KW"/>
</dbReference>
<dbReference type="GO" id="GO:0005856">
    <property type="term" value="C:cytoskeleton"/>
    <property type="evidence" value="ECO:0007669"/>
    <property type="project" value="UniProtKB-SubCell"/>
</dbReference>
<dbReference type="GO" id="GO:0031143">
    <property type="term" value="C:pseudopodium"/>
    <property type="evidence" value="ECO:0007669"/>
    <property type="project" value="UniProtKB-SubCell"/>
</dbReference>
<dbReference type="FunFam" id="2.60.40.10:FF:001120">
    <property type="entry name" value="Major sperm protein 19/31/40/45/50/51/53/59/61/65/81/113/142"/>
    <property type="match status" value="1"/>
</dbReference>
<dbReference type="Gene3D" id="2.60.40.10">
    <property type="entry name" value="Immunoglobulins"/>
    <property type="match status" value="1"/>
</dbReference>
<dbReference type="InterPro" id="IPR013783">
    <property type="entry name" value="Ig-like_fold"/>
</dbReference>
<dbReference type="InterPro" id="IPR000535">
    <property type="entry name" value="MSP_dom"/>
</dbReference>
<dbReference type="InterPro" id="IPR051155">
    <property type="entry name" value="Nematode_MSP"/>
</dbReference>
<dbReference type="InterPro" id="IPR008962">
    <property type="entry name" value="PapD-like_sf"/>
</dbReference>
<dbReference type="PANTHER" id="PTHR22920">
    <property type="entry name" value="MAJOR SPERM PROTEIN"/>
    <property type="match status" value="1"/>
</dbReference>
<dbReference type="PANTHER" id="PTHR22920:SF7">
    <property type="entry name" value="MSP DOMAIN-CONTAINING PROTEIN-RELATED"/>
    <property type="match status" value="1"/>
</dbReference>
<dbReference type="Pfam" id="PF00635">
    <property type="entry name" value="Motile_Sperm"/>
    <property type="match status" value="1"/>
</dbReference>
<dbReference type="SUPFAM" id="SSF49354">
    <property type="entry name" value="PapD-like"/>
    <property type="match status" value="1"/>
</dbReference>
<dbReference type="PROSITE" id="PS50202">
    <property type="entry name" value="MSP"/>
    <property type="match status" value="1"/>
</dbReference>
<name>MSP10_CAEEL</name>
<gene>
    <name type="primary">msp-10</name>
    <name type="ORF">K07F5.2</name>
</gene>
<gene>
    <name type="primary">msp-36</name>
    <name type="ORF">C04G2.4</name>
</gene>
<gene>
    <name type="primary">msp-56</name>
    <name type="ORF">K07F5.3</name>
</gene>
<gene>
    <name type="primary">msp-76</name>
    <name type="ORF">ZK1251.6</name>
</gene>
<accession>P05634</accession>
<accession>P05635</accession>
<accession>Q27280</accession>